<organism>
    <name type="scientific">Bacillus anthracis</name>
    <dbReference type="NCBI Taxonomy" id="1392"/>
    <lineage>
        <taxon>Bacteria</taxon>
        <taxon>Bacillati</taxon>
        <taxon>Bacillota</taxon>
        <taxon>Bacilli</taxon>
        <taxon>Bacillales</taxon>
        <taxon>Bacillaceae</taxon>
        <taxon>Bacillus</taxon>
        <taxon>Bacillus cereus group</taxon>
    </lineage>
</organism>
<protein>
    <recommendedName>
        <fullName evidence="1">2-C-methyl-D-erythritol 2,4-cyclodiphosphate synthase</fullName>
        <shortName evidence="1">MECDP-synthase</shortName>
        <shortName evidence="1">MECPP-synthase</shortName>
        <shortName evidence="1">MECPS</shortName>
        <ecNumber evidence="1">4.6.1.12</ecNumber>
    </recommendedName>
</protein>
<comment type="function">
    <text evidence="1">Involved in the biosynthesis of isopentenyl diphosphate (IPP) and dimethylallyl diphosphate (DMAPP), two major building blocks of isoprenoid compounds. Catalyzes the conversion of 4-diphosphocytidyl-2-C-methyl-D-erythritol 2-phosphate (CDP-ME2P) to 2-C-methyl-D-erythritol 2,4-cyclodiphosphate (ME-CPP) with a corresponding release of cytidine 5-monophosphate (CMP).</text>
</comment>
<comment type="catalytic activity">
    <reaction evidence="1">
        <text>4-CDP-2-C-methyl-D-erythritol 2-phosphate = 2-C-methyl-D-erythritol 2,4-cyclic diphosphate + CMP</text>
        <dbReference type="Rhea" id="RHEA:23864"/>
        <dbReference type="ChEBI" id="CHEBI:57919"/>
        <dbReference type="ChEBI" id="CHEBI:58483"/>
        <dbReference type="ChEBI" id="CHEBI:60377"/>
        <dbReference type="EC" id="4.6.1.12"/>
    </reaction>
</comment>
<comment type="cofactor">
    <cofactor evidence="1">
        <name>a divalent metal cation</name>
        <dbReference type="ChEBI" id="CHEBI:60240"/>
    </cofactor>
    <text evidence="1">Binds 1 divalent metal cation per subunit.</text>
</comment>
<comment type="pathway">
    <text evidence="1">Isoprenoid biosynthesis; isopentenyl diphosphate biosynthesis via DXP pathway; isopentenyl diphosphate from 1-deoxy-D-xylulose 5-phosphate: step 4/6.</text>
</comment>
<comment type="subunit">
    <text evidence="1">Homotrimer.</text>
</comment>
<comment type="similarity">
    <text evidence="1">Belongs to the IspF family.</text>
</comment>
<accession>Q81VV4</accession>
<accession>Q6I4V8</accession>
<accession>Q6KYK2</accession>
<name>ISPF_BACAN</name>
<gene>
    <name evidence="1" type="primary">ispF</name>
    <name type="ordered locus">BA_0085</name>
    <name type="ordered locus">GBAA_0085</name>
    <name type="ordered locus">BAS0086</name>
</gene>
<keyword id="KW-0414">Isoprene biosynthesis</keyword>
<keyword id="KW-0456">Lyase</keyword>
<keyword id="KW-0479">Metal-binding</keyword>
<keyword id="KW-1185">Reference proteome</keyword>
<sequence length="158" mass="17219">MFRIGQGFDVHEFAEGRPLIIGGITIPHEKGLIGHSDADVLLHTIADACLGAIAAGDIGKHFPDTDPAFKDADSAVLLQKVWEFVREQGYELGNLDCTIIAQKPKMAPHIESMRKRISELLETSIDNINVKATTTEKLGFTGREEGIASQAVVLLQKK</sequence>
<proteinExistence type="inferred from homology"/>
<reference key="1">
    <citation type="journal article" date="2003" name="Nature">
        <title>The genome sequence of Bacillus anthracis Ames and comparison to closely related bacteria.</title>
        <authorList>
            <person name="Read T.D."/>
            <person name="Peterson S.N."/>
            <person name="Tourasse N.J."/>
            <person name="Baillie L.W."/>
            <person name="Paulsen I.T."/>
            <person name="Nelson K.E."/>
            <person name="Tettelin H."/>
            <person name="Fouts D.E."/>
            <person name="Eisen J.A."/>
            <person name="Gill S.R."/>
            <person name="Holtzapple E.K."/>
            <person name="Okstad O.A."/>
            <person name="Helgason E."/>
            <person name="Rilstone J."/>
            <person name="Wu M."/>
            <person name="Kolonay J.F."/>
            <person name="Beanan M.J."/>
            <person name="Dodson R.J."/>
            <person name="Brinkac L.M."/>
            <person name="Gwinn M.L."/>
            <person name="DeBoy R.T."/>
            <person name="Madpu R."/>
            <person name="Daugherty S.C."/>
            <person name="Durkin A.S."/>
            <person name="Haft D.H."/>
            <person name="Nelson W.C."/>
            <person name="Peterson J.D."/>
            <person name="Pop M."/>
            <person name="Khouri H.M."/>
            <person name="Radune D."/>
            <person name="Benton J.L."/>
            <person name="Mahamoud Y."/>
            <person name="Jiang L."/>
            <person name="Hance I.R."/>
            <person name="Weidman J.F."/>
            <person name="Berry K.J."/>
            <person name="Plaut R.D."/>
            <person name="Wolf A.M."/>
            <person name="Watkins K.L."/>
            <person name="Nierman W.C."/>
            <person name="Hazen A."/>
            <person name="Cline R.T."/>
            <person name="Redmond C."/>
            <person name="Thwaite J.E."/>
            <person name="White O."/>
            <person name="Salzberg S.L."/>
            <person name="Thomason B."/>
            <person name="Friedlander A.M."/>
            <person name="Koehler T.M."/>
            <person name="Hanna P.C."/>
            <person name="Kolstoe A.-B."/>
            <person name="Fraser C.M."/>
        </authorList>
    </citation>
    <scope>NUCLEOTIDE SEQUENCE [LARGE SCALE GENOMIC DNA]</scope>
    <source>
        <strain>Ames / isolate Porton</strain>
    </source>
</reference>
<reference key="2">
    <citation type="journal article" date="2009" name="J. Bacteriol.">
        <title>The complete genome sequence of Bacillus anthracis Ames 'Ancestor'.</title>
        <authorList>
            <person name="Ravel J."/>
            <person name="Jiang L."/>
            <person name="Stanley S.T."/>
            <person name="Wilson M.R."/>
            <person name="Decker R.S."/>
            <person name="Read T.D."/>
            <person name="Worsham P."/>
            <person name="Keim P.S."/>
            <person name="Salzberg S.L."/>
            <person name="Fraser-Liggett C.M."/>
            <person name="Rasko D.A."/>
        </authorList>
    </citation>
    <scope>NUCLEOTIDE SEQUENCE [LARGE SCALE GENOMIC DNA]</scope>
    <source>
        <strain>Ames ancestor</strain>
    </source>
</reference>
<reference key="3">
    <citation type="submission" date="2004-01" db="EMBL/GenBank/DDBJ databases">
        <title>Complete genome sequence of Bacillus anthracis Sterne.</title>
        <authorList>
            <person name="Brettin T.S."/>
            <person name="Bruce D."/>
            <person name="Challacombe J.F."/>
            <person name="Gilna P."/>
            <person name="Han C."/>
            <person name="Hill K."/>
            <person name="Hitchcock P."/>
            <person name="Jackson P."/>
            <person name="Keim P."/>
            <person name="Longmire J."/>
            <person name="Lucas S."/>
            <person name="Okinaka R."/>
            <person name="Richardson P."/>
            <person name="Rubin E."/>
            <person name="Tice H."/>
        </authorList>
    </citation>
    <scope>NUCLEOTIDE SEQUENCE [LARGE SCALE GENOMIC DNA]</scope>
    <source>
        <strain>Sterne</strain>
    </source>
</reference>
<dbReference type="EC" id="4.6.1.12" evidence="1"/>
<dbReference type="EMBL" id="AE016879">
    <property type="protein sequence ID" value="AAP24140.1"/>
    <property type="molecule type" value="Genomic_DNA"/>
</dbReference>
<dbReference type="EMBL" id="AE017334">
    <property type="protein sequence ID" value="AAT29165.1"/>
    <property type="molecule type" value="Genomic_DNA"/>
</dbReference>
<dbReference type="EMBL" id="AE017225">
    <property type="protein sequence ID" value="AAT52423.1"/>
    <property type="molecule type" value="Genomic_DNA"/>
</dbReference>
<dbReference type="RefSeq" id="NP_842654.1">
    <property type="nucleotide sequence ID" value="NC_003997.3"/>
</dbReference>
<dbReference type="RefSeq" id="WP_000488386.1">
    <property type="nucleotide sequence ID" value="NZ_WXXJ01000051.1"/>
</dbReference>
<dbReference type="RefSeq" id="YP_026372.1">
    <property type="nucleotide sequence ID" value="NC_005945.1"/>
</dbReference>
<dbReference type="SMR" id="Q81VV4"/>
<dbReference type="STRING" id="261594.GBAA_0085"/>
<dbReference type="DNASU" id="1088079"/>
<dbReference type="GeneID" id="93010967"/>
<dbReference type="KEGG" id="ban:BA_0085"/>
<dbReference type="KEGG" id="bar:GBAA_0085"/>
<dbReference type="KEGG" id="bat:BAS0086"/>
<dbReference type="PATRIC" id="fig|198094.11.peg.83"/>
<dbReference type="eggNOG" id="COG0245">
    <property type="taxonomic scope" value="Bacteria"/>
</dbReference>
<dbReference type="HOGENOM" id="CLU_084630_2_0_9"/>
<dbReference type="OMA" id="LIHAIMD"/>
<dbReference type="OrthoDB" id="9804336at2"/>
<dbReference type="UniPathway" id="UPA00056">
    <property type="reaction ID" value="UER00095"/>
</dbReference>
<dbReference type="Proteomes" id="UP000000427">
    <property type="component" value="Chromosome"/>
</dbReference>
<dbReference type="Proteomes" id="UP000000594">
    <property type="component" value="Chromosome"/>
</dbReference>
<dbReference type="GO" id="GO:0008685">
    <property type="term" value="F:2-C-methyl-D-erythritol 2,4-cyclodiphosphate synthase activity"/>
    <property type="evidence" value="ECO:0007669"/>
    <property type="project" value="UniProtKB-UniRule"/>
</dbReference>
<dbReference type="GO" id="GO:0046872">
    <property type="term" value="F:metal ion binding"/>
    <property type="evidence" value="ECO:0007669"/>
    <property type="project" value="UniProtKB-KW"/>
</dbReference>
<dbReference type="GO" id="GO:0019288">
    <property type="term" value="P:isopentenyl diphosphate biosynthetic process, methylerythritol 4-phosphate pathway"/>
    <property type="evidence" value="ECO:0007669"/>
    <property type="project" value="UniProtKB-UniRule"/>
</dbReference>
<dbReference type="GO" id="GO:0016114">
    <property type="term" value="P:terpenoid biosynthetic process"/>
    <property type="evidence" value="ECO:0007669"/>
    <property type="project" value="InterPro"/>
</dbReference>
<dbReference type="CDD" id="cd00554">
    <property type="entry name" value="MECDP_synthase"/>
    <property type="match status" value="1"/>
</dbReference>
<dbReference type="FunFam" id="3.30.1330.50:FF:000001">
    <property type="entry name" value="2-C-methyl-D-erythritol 2,4-cyclodiphosphate synthase"/>
    <property type="match status" value="1"/>
</dbReference>
<dbReference type="Gene3D" id="3.30.1330.50">
    <property type="entry name" value="2-C-methyl-D-erythritol 2,4-cyclodiphosphate synthase"/>
    <property type="match status" value="1"/>
</dbReference>
<dbReference type="HAMAP" id="MF_00107">
    <property type="entry name" value="IspF"/>
    <property type="match status" value="1"/>
</dbReference>
<dbReference type="InterPro" id="IPR003526">
    <property type="entry name" value="MECDP_synthase"/>
</dbReference>
<dbReference type="InterPro" id="IPR020555">
    <property type="entry name" value="MECDP_synthase_CS"/>
</dbReference>
<dbReference type="InterPro" id="IPR036571">
    <property type="entry name" value="MECDP_synthase_sf"/>
</dbReference>
<dbReference type="NCBIfam" id="TIGR00151">
    <property type="entry name" value="ispF"/>
    <property type="match status" value="1"/>
</dbReference>
<dbReference type="PANTHER" id="PTHR43181">
    <property type="entry name" value="2-C-METHYL-D-ERYTHRITOL 2,4-CYCLODIPHOSPHATE SYNTHASE, CHLOROPLASTIC"/>
    <property type="match status" value="1"/>
</dbReference>
<dbReference type="PANTHER" id="PTHR43181:SF1">
    <property type="entry name" value="2-C-METHYL-D-ERYTHRITOL 2,4-CYCLODIPHOSPHATE SYNTHASE, CHLOROPLASTIC"/>
    <property type="match status" value="1"/>
</dbReference>
<dbReference type="Pfam" id="PF02542">
    <property type="entry name" value="YgbB"/>
    <property type="match status" value="1"/>
</dbReference>
<dbReference type="SUPFAM" id="SSF69765">
    <property type="entry name" value="IpsF-like"/>
    <property type="match status" value="1"/>
</dbReference>
<dbReference type="PROSITE" id="PS01350">
    <property type="entry name" value="ISPF"/>
    <property type="match status" value="1"/>
</dbReference>
<evidence type="ECO:0000255" key="1">
    <source>
        <dbReference type="HAMAP-Rule" id="MF_00107"/>
    </source>
</evidence>
<feature type="chain" id="PRO_0000189433" description="2-C-methyl-D-erythritol 2,4-cyclodiphosphate synthase">
    <location>
        <begin position="1"/>
        <end position="158"/>
    </location>
</feature>
<feature type="binding site" evidence="1">
    <location>
        <begin position="9"/>
        <end position="11"/>
    </location>
    <ligand>
        <name>4-CDP-2-C-methyl-D-erythritol 2-phosphate</name>
        <dbReference type="ChEBI" id="CHEBI:57919"/>
    </ligand>
</feature>
<feature type="binding site" evidence="1">
    <location>
        <position position="9"/>
    </location>
    <ligand>
        <name>a divalent metal cation</name>
        <dbReference type="ChEBI" id="CHEBI:60240"/>
    </ligand>
</feature>
<feature type="binding site" evidence="1">
    <location>
        <position position="11"/>
    </location>
    <ligand>
        <name>a divalent metal cation</name>
        <dbReference type="ChEBI" id="CHEBI:60240"/>
    </ligand>
</feature>
<feature type="binding site" evidence="1">
    <location>
        <begin position="35"/>
        <end position="36"/>
    </location>
    <ligand>
        <name>4-CDP-2-C-methyl-D-erythritol 2-phosphate</name>
        <dbReference type="ChEBI" id="CHEBI:57919"/>
    </ligand>
</feature>
<feature type="binding site" evidence="1">
    <location>
        <position position="43"/>
    </location>
    <ligand>
        <name>a divalent metal cation</name>
        <dbReference type="ChEBI" id="CHEBI:60240"/>
    </ligand>
</feature>
<feature type="binding site" evidence="1">
    <location>
        <begin position="57"/>
        <end position="59"/>
    </location>
    <ligand>
        <name>4-CDP-2-C-methyl-D-erythritol 2-phosphate</name>
        <dbReference type="ChEBI" id="CHEBI:57919"/>
    </ligand>
</feature>
<feature type="binding site" evidence="1">
    <location>
        <begin position="62"/>
        <end position="66"/>
    </location>
    <ligand>
        <name>4-CDP-2-C-methyl-D-erythritol 2-phosphate</name>
        <dbReference type="ChEBI" id="CHEBI:57919"/>
    </ligand>
</feature>
<feature type="binding site" evidence="1">
    <location>
        <begin position="101"/>
        <end position="107"/>
    </location>
    <ligand>
        <name>4-CDP-2-C-methyl-D-erythritol 2-phosphate</name>
        <dbReference type="ChEBI" id="CHEBI:57919"/>
    </ligand>
</feature>
<feature type="binding site" evidence="1">
    <location>
        <begin position="133"/>
        <end position="136"/>
    </location>
    <ligand>
        <name>4-CDP-2-C-methyl-D-erythritol 2-phosphate</name>
        <dbReference type="ChEBI" id="CHEBI:57919"/>
    </ligand>
</feature>
<feature type="binding site" evidence="1">
    <location>
        <position position="140"/>
    </location>
    <ligand>
        <name>4-CDP-2-C-methyl-D-erythritol 2-phosphate</name>
        <dbReference type="ChEBI" id="CHEBI:57919"/>
    </ligand>
</feature>
<feature type="binding site" evidence="1">
    <location>
        <position position="143"/>
    </location>
    <ligand>
        <name>4-CDP-2-C-methyl-D-erythritol 2-phosphate</name>
        <dbReference type="ChEBI" id="CHEBI:57919"/>
    </ligand>
</feature>
<feature type="site" description="Transition state stabilizer" evidence="1">
    <location>
        <position position="35"/>
    </location>
</feature>
<feature type="site" description="Transition state stabilizer" evidence="1">
    <location>
        <position position="134"/>
    </location>
</feature>